<name>BH090_ARATH</name>
<proteinExistence type="evidence at protein level"/>
<comment type="subunit">
    <text evidence="3">Homodimer.</text>
</comment>
<comment type="interaction">
    <interactant intactId="EBI-15216058">
        <id>Q0WNR2</id>
    </interactant>
    <interactant intactId="EBI-15200952">
        <id>Q84TK1</id>
        <label>BHLH10</label>
    </interactant>
    <organismsDiffer>false</organismsDiffer>
    <experiments>3</experiments>
</comment>
<comment type="subcellular location">
    <subcellularLocation>
        <location evidence="1">Nucleus</location>
    </subcellularLocation>
</comment>
<comment type="tissue specificity">
    <text evidence="2">Expressed constitutively in roots, leaves, stems, and flowers.</text>
</comment>
<comment type="sequence caution" evidence="3">
    <conflict type="erroneous gene model prediction">
        <sequence resource="EMBL-CDS" id="AAD39586"/>
    </conflict>
</comment>
<comment type="sequence caution" evidence="3">
    <conflict type="erroneous gene model prediction">
        <sequence resource="EMBL-CDS" id="AAF17654"/>
    </conflict>
</comment>
<comment type="sequence caution" evidence="3">
    <conflict type="erroneous gene model prediction">
        <sequence resource="EMBL-CDS" id="AAF17655"/>
    </conflict>
</comment>
<keyword id="KW-0238">DNA-binding</keyword>
<keyword id="KW-0539">Nucleus</keyword>
<keyword id="KW-1185">Reference proteome</keyword>
<keyword id="KW-0804">Transcription</keyword>
<keyword id="KW-0805">Transcription regulation</keyword>
<protein>
    <recommendedName>
        <fullName>Transcription factor bHLH90</fullName>
    </recommendedName>
    <alternativeName>
        <fullName>Basic helix-loop-helix protein 90</fullName>
        <shortName>AtbHLH90</shortName>
        <shortName>bHLH 90</shortName>
    </alternativeName>
    <alternativeName>
        <fullName>Transcription factor EN 50</fullName>
    </alternativeName>
    <alternativeName>
        <fullName>bHLH transcription factor bHLH090</fullName>
    </alternativeName>
</protein>
<reference key="1">
    <citation type="journal article" date="2000" name="Nature">
        <title>Sequence and analysis of chromosome 1 of the plant Arabidopsis thaliana.</title>
        <authorList>
            <person name="Theologis A."/>
            <person name="Ecker J.R."/>
            <person name="Palm C.J."/>
            <person name="Federspiel N.A."/>
            <person name="Kaul S."/>
            <person name="White O."/>
            <person name="Alonso J."/>
            <person name="Altafi H."/>
            <person name="Araujo R."/>
            <person name="Bowman C.L."/>
            <person name="Brooks S.Y."/>
            <person name="Buehler E."/>
            <person name="Chan A."/>
            <person name="Chao Q."/>
            <person name="Chen H."/>
            <person name="Cheuk R.F."/>
            <person name="Chin C.W."/>
            <person name="Chung M.K."/>
            <person name="Conn L."/>
            <person name="Conway A.B."/>
            <person name="Conway A.R."/>
            <person name="Creasy T.H."/>
            <person name="Dewar K."/>
            <person name="Dunn P."/>
            <person name="Etgu P."/>
            <person name="Feldblyum T.V."/>
            <person name="Feng J.-D."/>
            <person name="Fong B."/>
            <person name="Fujii C.Y."/>
            <person name="Gill J.E."/>
            <person name="Goldsmith A.D."/>
            <person name="Haas B."/>
            <person name="Hansen N.F."/>
            <person name="Hughes B."/>
            <person name="Huizar L."/>
            <person name="Hunter J.L."/>
            <person name="Jenkins J."/>
            <person name="Johnson-Hopson C."/>
            <person name="Khan S."/>
            <person name="Khaykin E."/>
            <person name="Kim C.J."/>
            <person name="Koo H.L."/>
            <person name="Kremenetskaia I."/>
            <person name="Kurtz D.B."/>
            <person name="Kwan A."/>
            <person name="Lam B."/>
            <person name="Langin-Hooper S."/>
            <person name="Lee A."/>
            <person name="Lee J.M."/>
            <person name="Lenz C.A."/>
            <person name="Li J.H."/>
            <person name="Li Y.-P."/>
            <person name="Lin X."/>
            <person name="Liu S.X."/>
            <person name="Liu Z.A."/>
            <person name="Luros J.S."/>
            <person name="Maiti R."/>
            <person name="Marziali A."/>
            <person name="Militscher J."/>
            <person name="Miranda M."/>
            <person name="Nguyen M."/>
            <person name="Nierman W.C."/>
            <person name="Osborne B.I."/>
            <person name="Pai G."/>
            <person name="Peterson J."/>
            <person name="Pham P.K."/>
            <person name="Rizzo M."/>
            <person name="Rooney T."/>
            <person name="Rowley D."/>
            <person name="Sakano H."/>
            <person name="Salzberg S.L."/>
            <person name="Schwartz J.R."/>
            <person name="Shinn P."/>
            <person name="Southwick A.M."/>
            <person name="Sun H."/>
            <person name="Tallon L.J."/>
            <person name="Tambunga G."/>
            <person name="Toriumi M.J."/>
            <person name="Town C.D."/>
            <person name="Utterback T."/>
            <person name="Van Aken S."/>
            <person name="Vaysberg M."/>
            <person name="Vysotskaia V.S."/>
            <person name="Walker M."/>
            <person name="Wu D."/>
            <person name="Yu G."/>
            <person name="Fraser C.M."/>
            <person name="Venter J.C."/>
            <person name="Davis R.W."/>
        </authorList>
    </citation>
    <scope>NUCLEOTIDE SEQUENCE [LARGE SCALE GENOMIC DNA]</scope>
    <source>
        <strain>cv. Columbia</strain>
    </source>
</reference>
<reference key="2">
    <citation type="journal article" date="2017" name="Plant J.">
        <title>Araport11: a complete reannotation of the Arabidopsis thaliana reference genome.</title>
        <authorList>
            <person name="Cheng C.Y."/>
            <person name="Krishnakumar V."/>
            <person name="Chan A.P."/>
            <person name="Thibaud-Nissen F."/>
            <person name="Schobel S."/>
            <person name="Town C.D."/>
        </authorList>
    </citation>
    <scope>GENOME REANNOTATION</scope>
    <source>
        <strain>cv. Columbia</strain>
    </source>
</reference>
<reference key="3">
    <citation type="submission" date="2006-07" db="EMBL/GenBank/DDBJ databases">
        <title>Large-scale analysis of RIKEN Arabidopsis full-length (RAFL) cDNAs.</title>
        <authorList>
            <person name="Totoki Y."/>
            <person name="Seki M."/>
            <person name="Ishida J."/>
            <person name="Nakajima M."/>
            <person name="Enju A."/>
            <person name="Kamiya A."/>
            <person name="Narusaka M."/>
            <person name="Shin-i T."/>
            <person name="Nakagawa M."/>
            <person name="Sakamoto N."/>
            <person name="Oishi K."/>
            <person name="Kohara Y."/>
            <person name="Kobayashi M."/>
            <person name="Toyoda A."/>
            <person name="Sakaki Y."/>
            <person name="Sakurai T."/>
            <person name="Iida K."/>
            <person name="Akiyama K."/>
            <person name="Satou M."/>
            <person name="Toyoda T."/>
            <person name="Konagaya A."/>
            <person name="Carninci P."/>
            <person name="Kawai J."/>
            <person name="Hayashizaki Y."/>
            <person name="Shinozaki K."/>
        </authorList>
    </citation>
    <scope>NUCLEOTIDE SEQUENCE [LARGE SCALE MRNA]</scope>
    <source>
        <strain>cv. Columbia</strain>
    </source>
</reference>
<reference key="4">
    <citation type="journal article" date="2003" name="Mol. Biol. Evol.">
        <title>The basic helix-loop-helix transcription factor family in plants: a genome-wide study of protein structure and functional diversity.</title>
        <authorList>
            <person name="Heim M.A."/>
            <person name="Jakoby M."/>
            <person name="Werber M."/>
            <person name="Martin C."/>
            <person name="Weisshaar B."/>
            <person name="Bailey P.C."/>
        </authorList>
    </citation>
    <scope>NUCLEOTIDE SEQUENCE [MRNA] OF 265-441</scope>
    <scope>TISSUE SPECIFICITY</scope>
    <scope>GENE FAMILY</scope>
    <scope>NOMENCLATURE</scope>
    <source>
        <strain>cv. Columbia</strain>
    </source>
</reference>
<reference key="5">
    <citation type="journal article" date="2003" name="Plant Cell">
        <title>The Arabidopsis basic/helix-loop-helix transcription factor family.</title>
        <authorList>
            <person name="Toledo-Ortiz G."/>
            <person name="Huq E."/>
            <person name="Quail P.H."/>
        </authorList>
    </citation>
    <scope>GENE FAMILY</scope>
</reference>
<reference key="6">
    <citation type="journal article" date="2003" name="Plant Cell">
        <title>Update on the basic helix-loop-helix transcription factor gene family in Arabidopsis thaliana.</title>
        <authorList>
            <person name="Bailey P.C."/>
            <person name="Martin C."/>
            <person name="Toledo-Ortiz G."/>
            <person name="Quail P.H."/>
            <person name="Huq E."/>
            <person name="Heim M.A."/>
            <person name="Jakoby M."/>
            <person name="Werber M."/>
            <person name="Weisshaar B."/>
        </authorList>
    </citation>
    <scope>GENE FAMILY</scope>
    <scope>NOMENCLATURE</scope>
</reference>
<dbReference type="EMBL" id="AC007067">
    <property type="protein sequence ID" value="AAD39586.1"/>
    <property type="status" value="ALT_SEQ"/>
    <property type="molecule type" value="Genomic_DNA"/>
</dbReference>
<dbReference type="EMBL" id="AC009398">
    <property type="protein sequence ID" value="AAF17654.1"/>
    <property type="status" value="ALT_SEQ"/>
    <property type="molecule type" value="Genomic_DNA"/>
</dbReference>
<dbReference type="EMBL" id="AC009398">
    <property type="protein sequence ID" value="AAF17655.1"/>
    <property type="status" value="ALT_SEQ"/>
    <property type="molecule type" value="Genomic_DNA"/>
</dbReference>
<dbReference type="EMBL" id="CP002684">
    <property type="protein sequence ID" value="AEE28609.1"/>
    <property type="molecule type" value="Genomic_DNA"/>
</dbReference>
<dbReference type="EMBL" id="AK229375">
    <property type="protein sequence ID" value="BAF01237.1"/>
    <property type="molecule type" value="mRNA"/>
</dbReference>
<dbReference type="EMBL" id="AF488620">
    <property type="status" value="NOT_ANNOTATED_CDS"/>
    <property type="molecule type" value="mRNA"/>
</dbReference>
<dbReference type="PIR" id="F86239">
    <property type="entry name" value="F86239"/>
</dbReference>
<dbReference type="RefSeq" id="NP_172531.2">
    <property type="nucleotide sequence ID" value="NM_100937.3"/>
</dbReference>
<dbReference type="SMR" id="Q0WNR2"/>
<dbReference type="BioGRID" id="22844">
    <property type="interactions" value="6"/>
</dbReference>
<dbReference type="FunCoup" id="Q0WNR2">
    <property type="interactions" value="68"/>
</dbReference>
<dbReference type="IntAct" id="Q0WNR2">
    <property type="interactions" value="6"/>
</dbReference>
<dbReference type="STRING" id="3702.Q0WNR2"/>
<dbReference type="iPTMnet" id="Q0WNR2"/>
<dbReference type="PaxDb" id="3702-AT1G10610.1"/>
<dbReference type="EnsemblPlants" id="AT1G10610.1">
    <property type="protein sequence ID" value="AT1G10610.1"/>
    <property type="gene ID" value="AT1G10610"/>
</dbReference>
<dbReference type="GeneID" id="837604"/>
<dbReference type="Gramene" id="AT1G10610.1">
    <property type="protein sequence ID" value="AT1G10610.1"/>
    <property type="gene ID" value="AT1G10610"/>
</dbReference>
<dbReference type="KEGG" id="ath:AT1G10610"/>
<dbReference type="Araport" id="AT1G10610"/>
<dbReference type="TAIR" id="AT1G10610"/>
<dbReference type="eggNOG" id="ENOG502QTEQ">
    <property type="taxonomic scope" value="Eukaryota"/>
</dbReference>
<dbReference type="HOGENOM" id="CLU_037477_0_0_1"/>
<dbReference type="InParanoid" id="Q0WNR2"/>
<dbReference type="OMA" id="PSRFIEM"/>
<dbReference type="PhylomeDB" id="Q0WNR2"/>
<dbReference type="PRO" id="PR:Q0WNR2"/>
<dbReference type="Proteomes" id="UP000006548">
    <property type="component" value="Chromosome 1"/>
</dbReference>
<dbReference type="ExpressionAtlas" id="Q0WNR2">
    <property type="expression patterns" value="baseline and differential"/>
</dbReference>
<dbReference type="GO" id="GO:0005634">
    <property type="term" value="C:nucleus"/>
    <property type="evidence" value="ECO:0007669"/>
    <property type="project" value="UniProtKB-SubCell"/>
</dbReference>
<dbReference type="GO" id="GO:0003677">
    <property type="term" value="F:DNA binding"/>
    <property type="evidence" value="ECO:0007669"/>
    <property type="project" value="UniProtKB-KW"/>
</dbReference>
<dbReference type="GO" id="GO:0003700">
    <property type="term" value="F:DNA-binding transcription factor activity"/>
    <property type="evidence" value="ECO:0000250"/>
    <property type="project" value="TAIR"/>
</dbReference>
<dbReference type="GO" id="GO:0046983">
    <property type="term" value="F:protein dimerization activity"/>
    <property type="evidence" value="ECO:0007669"/>
    <property type="project" value="InterPro"/>
</dbReference>
<dbReference type="GO" id="GO:0006355">
    <property type="term" value="P:regulation of DNA-templated transcription"/>
    <property type="evidence" value="ECO:0000304"/>
    <property type="project" value="TAIR"/>
</dbReference>
<dbReference type="CDD" id="cd11443">
    <property type="entry name" value="bHLH_AtAMS_like"/>
    <property type="match status" value="1"/>
</dbReference>
<dbReference type="Gene3D" id="4.10.280.10">
    <property type="entry name" value="Helix-loop-helix DNA-binding domain"/>
    <property type="match status" value="1"/>
</dbReference>
<dbReference type="InterPro" id="IPR011598">
    <property type="entry name" value="bHLH_dom"/>
</dbReference>
<dbReference type="InterPro" id="IPR036638">
    <property type="entry name" value="HLH_DNA-bd_sf"/>
</dbReference>
<dbReference type="InterPro" id="IPR025610">
    <property type="entry name" value="MYC/MYB_N"/>
</dbReference>
<dbReference type="InterPro" id="IPR051358">
    <property type="entry name" value="TF_AMS/ICE1/BHLH6-like"/>
</dbReference>
<dbReference type="PANTHER" id="PTHR31945:SF63">
    <property type="entry name" value="TRANSCRIPTION FACTOR BHLH90"/>
    <property type="match status" value="1"/>
</dbReference>
<dbReference type="PANTHER" id="PTHR31945">
    <property type="entry name" value="TRANSCRIPTION FACTOR SCREAM2-RELATED"/>
    <property type="match status" value="1"/>
</dbReference>
<dbReference type="Pfam" id="PF14215">
    <property type="entry name" value="bHLH-MYC_N"/>
    <property type="match status" value="1"/>
</dbReference>
<dbReference type="Pfam" id="PF00010">
    <property type="entry name" value="HLH"/>
    <property type="match status" value="1"/>
</dbReference>
<dbReference type="SMART" id="SM00353">
    <property type="entry name" value="HLH"/>
    <property type="match status" value="1"/>
</dbReference>
<dbReference type="SUPFAM" id="SSF47459">
    <property type="entry name" value="HLH, helix-loop-helix DNA-binding domain"/>
    <property type="match status" value="1"/>
</dbReference>
<dbReference type="PROSITE" id="PS50888">
    <property type="entry name" value="BHLH"/>
    <property type="match status" value="1"/>
</dbReference>
<accession>Q0WNR2</accession>
<accession>Q9SGY8</accession>
<accession>Q9SGY9</accession>
<accession>Q9XII8</accession>
<gene>
    <name type="primary">BHLH90</name>
    <name type="synonym">EN50</name>
    <name type="ordered locus">At1g10610</name>
    <name type="ORF">F20B24.4</name>
    <name type="ORF">F20B24.5</name>
    <name type="ORF">T10O24.26</name>
</gene>
<evidence type="ECO:0000255" key="1">
    <source>
        <dbReference type="PROSITE-ProRule" id="PRU00981"/>
    </source>
</evidence>
<evidence type="ECO:0000269" key="2">
    <source>
    </source>
</evidence>
<evidence type="ECO:0000305" key="3"/>
<organism>
    <name type="scientific">Arabidopsis thaliana</name>
    <name type="common">Mouse-ear cress</name>
    <dbReference type="NCBI Taxonomy" id="3702"/>
    <lineage>
        <taxon>Eukaryota</taxon>
        <taxon>Viridiplantae</taxon>
        <taxon>Streptophyta</taxon>
        <taxon>Embryophyta</taxon>
        <taxon>Tracheophyta</taxon>
        <taxon>Spermatophyta</taxon>
        <taxon>Magnoliopsida</taxon>
        <taxon>eudicotyledons</taxon>
        <taxon>Gunneridae</taxon>
        <taxon>Pentapetalae</taxon>
        <taxon>rosids</taxon>
        <taxon>malvids</taxon>
        <taxon>Brassicales</taxon>
        <taxon>Brassicaceae</taxon>
        <taxon>Camelineae</taxon>
        <taxon>Arabidopsis</taxon>
    </lineage>
</organism>
<feature type="chain" id="PRO_0000358781" description="Transcription factor bHLH90">
    <location>
        <begin position="1"/>
        <end position="441"/>
    </location>
</feature>
<feature type="domain" description="bHLH" evidence="1">
    <location>
        <begin position="260"/>
        <end position="309"/>
    </location>
</feature>
<feature type="sequence conflict" description="In Ref. 4; AF488620." evidence="3" ref="4">
    <original>K</original>
    <variation>R</variation>
    <location>
        <position position="289"/>
    </location>
</feature>
<sequence>MMMMRGGERVKEFLRPFVDSRTWDLCVIWKLGDDPSRFIEWVGCCCSGCYIDKNIKLENSEEGGTGRKKKASFCRDDHNKHRIRTLACEALSRFPLFMPLYPGIHGEVVMSKSPKWLVNSGSKMEMFSTRVLVPVSDGLVELFAFDMRPFDESMVHLIMSRCTTFFEPFPEQRLQFRIIPRAEESMSSGVNLSVEGGGSSSVSNPSSETQNLFGNYPNASCVEILREEQTPCLIMNKEKDVVVQNANDSKANKKLLPTENFKSKNLHSERKRRERINQAMYGLRAVVPKITKLNKIGIFSDAVDYINELLVEKQKLEDELKGINEMECKEIAAEEQSAIADPEAERVSSKSNKRVKKNEVKIEVHETGERDFLIRVVQEHKQDGFKRLIEAVDLCELEIIDVNFTRLDLTVMTVLNVKANKDGIACGILRDLLLKMMITSI</sequence>